<accession>C1CQ76</accession>
<gene>
    <name evidence="1" type="primary">pnp</name>
    <name type="ordered locus">SPT_0617</name>
</gene>
<feature type="chain" id="PRO_1000185757" description="Polyribonucleotide nucleotidyltransferase">
    <location>
        <begin position="1"/>
        <end position="737"/>
    </location>
</feature>
<feature type="domain" description="KH" evidence="1">
    <location>
        <begin position="556"/>
        <end position="615"/>
    </location>
</feature>
<feature type="domain" description="S1 motif" evidence="1">
    <location>
        <begin position="625"/>
        <end position="693"/>
    </location>
</feature>
<feature type="region of interest" description="Disordered" evidence="2">
    <location>
        <begin position="691"/>
        <end position="737"/>
    </location>
</feature>
<feature type="compositionally biased region" description="Basic and acidic residues" evidence="2">
    <location>
        <begin position="700"/>
        <end position="714"/>
    </location>
</feature>
<feature type="compositionally biased region" description="Basic residues" evidence="2">
    <location>
        <begin position="715"/>
        <end position="724"/>
    </location>
</feature>
<feature type="compositionally biased region" description="Basic and acidic residues" evidence="2">
    <location>
        <begin position="725"/>
        <end position="737"/>
    </location>
</feature>
<feature type="binding site" evidence="1">
    <location>
        <position position="489"/>
    </location>
    <ligand>
        <name>Mg(2+)</name>
        <dbReference type="ChEBI" id="CHEBI:18420"/>
    </ligand>
</feature>
<feature type="binding site" evidence="1">
    <location>
        <position position="495"/>
    </location>
    <ligand>
        <name>Mg(2+)</name>
        <dbReference type="ChEBI" id="CHEBI:18420"/>
    </ligand>
</feature>
<organism>
    <name type="scientific">Streptococcus pneumoniae (strain Taiwan19F-14)</name>
    <dbReference type="NCBI Taxonomy" id="487213"/>
    <lineage>
        <taxon>Bacteria</taxon>
        <taxon>Bacillati</taxon>
        <taxon>Bacillota</taxon>
        <taxon>Bacilli</taxon>
        <taxon>Lactobacillales</taxon>
        <taxon>Streptococcaceae</taxon>
        <taxon>Streptococcus</taxon>
    </lineage>
</organism>
<proteinExistence type="inferred from homology"/>
<protein>
    <recommendedName>
        <fullName evidence="1">Polyribonucleotide nucleotidyltransferase</fullName>
        <ecNumber evidence="1">2.7.7.8</ecNumber>
    </recommendedName>
    <alternativeName>
        <fullName evidence="1">Polynucleotide phosphorylase</fullName>
        <shortName evidence="1">PNPase</shortName>
    </alternativeName>
</protein>
<evidence type="ECO:0000255" key="1">
    <source>
        <dbReference type="HAMAP-Rule" id="MF_01595"/>
    </source>
</evidence>
<evidence type="ECO:0000256" key="2">
    <source>
        <dbReference type="SAM" id="MobiDB-lite"/>
    </source>
</evidence>
<reference key="1">
    <citation type="journal article" date="2010" name="Genome Biol.">
        <title>Structure and dynamics of the pan-genome of Streptococcus pneumoniae and closely related species.</title>
        <authorList>
            <person name="Donati C."/>
            <person name="Hiller N.L."/>
            <person name="Tettelin H."/>
            <person name="Muzzi A."/>
            <person name="Croucher N.J."/>
            <person name="Angiuoli S.V."/>
            <person name="Oggioni M."/>
            <person name="Dunning Hotopp J.C."/>
            <person name="Hu F.Z."/>
            <person name="Riley D.R."/>
            <person name="Covacci A."/>
            <person name="Mitchell T.J."/>
            <person name="Bentley S.D."/>
            <person name="Kilian M."/>
            <person name="Ehrlich G.D."/>
            <person name="Rappuoli R."/>
            <person name="Moxon E.R."/>
            <person name="Masignani V."/>
        </authorList>
    </citation>
    <scope>NUCLEOTIDE SEQUENCE [LARGE SCALE GENOMIC DNA]</scope>
    <source>
        <strain>Taiwan19F-14</strain>
    </source>
</reference>
<comment type="function">
    <text evidence="1">Involved in mRNA degradation. Catalyzes the phosphorolysis of single-stranded polyribonucleotides processively in the 3'- to 5'-direction.</text>
</comment>
<comment type="catalytic activity">
    <reaction evidence="1">
        <text>RNA(n+1) + phosphate = RNA(n) + a ribonucleoside 5'-diphosphate</text>
        <dbReference type="Rhea" id="RHEA:22096"/>
        <dbReference type="Rhea" id="RHEA-COMP:14527"/>
        <dbReference type="Rhea" id="RHEA-COMP:17342"/>
        <dbReference type="ChEBI" id="CHEBI:43474"/>
        <dbReference type="ChEBI" id="CHEBI:57930"/>
        <dbReference type="ChEBI" id="CHEBI:140395"/>
        <dbReference type="EC" id="2.7.7.8"/>
    </reaction>
</comment>
<comment type="cofactor">
    <cofactor evidence="1">
        <name>Mg(2+)</name>
        <dbReference type="ChEBI" id="CHEBI:18420"/>
    </cofactor>
</comment>
<comment type="subcellular location">
    <subcellularLocation>
        <location evidence="1">Cytoplasm</location>
    </subcellularLocation>
</comment>
<comment type="similarity">
    <text evidence="1">Belongs to the polyribonucleotide nucleotidyltransferase family.</text>
</comment>
<keyword id="KW-0963">Cytoplasm</keyword>
<keyword id="KW-0460">Magnesium</keyword>
<keyword id="KW-0479">Metal-binding</keyword>
<keyword id="KW-0548">Nucleotidyltransferase</keyword>
<keyword id="KW-0694">RNA-binding</keyword>
<keyword id="KW-0808">Transferase</keyword>
<name>PNP_STRZT</name>
<sequence length="737" mass="81001">MAKQVFQTTFAGRELIVETGQVAKQANGSVVVRYGESTVLTAAVMSKKMATGDFFPLQVNYEEKMYAAGKFPGGFMKREGRPSTDATLTARLIDRPIRPMFAEGFRNEVQVINTVLSYDENASAPMAAMFGSSLALSISDIPFDGPIAGVQVGYVDGQIIINPSQEQAEQSLLELTVAGTKHAINMVESGAKELSEEIMLEALLKGHEAVKELIAFQEEIVAAVGKEKAEVELLHVDAELQAEIIAAYNSDLQKAVQVEEKLAREAATQAVKDQVTAVYEEKYADHEEFDRIMRDVAEILEQMEHAEVRRLITEDKVRPDGRKVDEIRPLDAVVDFLPRVHGSGLFTRGQTQALSVLTLAPMGETQIIDGLDPEYKKRFMHHYNFPQYSVGETGRYGAPGRREIGHGALGERALAQVLPSLEEFPYAIRLVAEVLESNGSSSQASICAGTLALMAGGVPIKAPVAGIAMGLISDGNNYTVLTDIQGLEDHFGDMDFKVAGTRDGITALQMDIKIQGITAEILTEALAQAKKARFEILDVIEATIPEVRPELAPTAPKIDTIKIDVDKIKIVIGKGGETIDKIIAETGVKIDIDEEGNVSIYSSDQDAINRAKEIIAGLVREAKVDEVYRAKVVRIEKFGAFVNLFDKTDALVHISEMAWTRTNRVEDLVEIGDEVDVKVIKIDEKGRIDASMKALLPRPPKPEHDEKGEKSERPHRPRHHKDHKPKKEFTETPKDSE</sequence>
<dbReference type="EC" id="2.7.7.8" evidence="1"/>
<dbReference type="EMBL" id="CP000921">
    <property type="protein sequence ID" value="ACO24204.1"/>
    <property type="molecule type" value="Genomic_DNA"/>
</dbReference>
<dbReference type="RefSeq" id="WP_001118973.1">
    <property type="nucleotide sequence ID" value="NC_012469.1"/>
</dbReference>
<dbReference type="SMR" id="C1CQ76"/>
<dbReference type="KEGG" id="snt:SPT_0617"/>
<dbReference type="HOGENOM" id="CLU_004217_2_2_9"/>
<dbReference type="GO" id="GO:0005829">
    <property type="term" value="C:cytosol"/>
    <property type="evidence" value="ECO:0007669"/>
    <property type="project" value="TreeGrafter"/>
</dbReference>
<dbReference type="GO" id="GO:0000175">
    <property type="term" value="F:3'-5'-RNA exonuclease activity"/>
    <property type="evidence" value="ECO:0007669"/>
    <property type="project" value="TreeGrafter"/>
</dbReference>
<dbReference type="GO" id="GO:0000287">
    <property type="term" value="F:magnesium ion binding"/>
    <property type="evidence" value="ECO:0007669"/>
    <property type="project" value="UniProtKB-UniRule"/>
</dbReference>
<dbReference type="GO" id="GO:0004654">
    <property type="term" value="F:polyribonucleotide nucleotidyltransferase activity"/>
    <property type="evidence" value="ECO:0007669"/>
    <property type="project" value="UniProtKB-UniRule"/>
</dbReference>
<dbReference type="GO" id="GO:0003723">
    <property type="term" value="F:RNA binding"/>
    <property type="evidence" value="ECO:0007669"/>
    <property type="project" value="UniProtKB-UniRule"/>
</dbReference>
<dbReference type="GO" id="GO:0006402">
    <property type="term" value="P:mRNA catabolic process"/>
    <property type="evidence" value="ECO:0007669"/>
    <property type="project" value="UniProtKB-UniRule"/>
</dbReference>
<dbReference type="GO" id="GO:0006396">
    <property type="term" value="P:RNA processing"/>
    <property type="evidence" value="ECO:0007669"/>
    <property type="project" value="InterPro"/>
</dbReference>
<dbReference type="CDD" id="cd02393">
    <property type="entry name" value="KH-I_PNPase"/>
    <property type="match status" value="1"/>
</dbReference>
<dbReference type="CDD" id="cd11363">
    <property type="entry name" value="RNase_PH_PNPase_1"/>
    <property type="match status" value="1"/>
</dbReference>
<dbReference type="CDD" id="cd11364">
    <property type="entry name" value="RNase_PH_PNPase_2"/>
    <property type="match status" value="1"/>
</dbReference>
<dbReference type="FunFam" id="2.40.50.140:FF:000023">
    <property type="entry name" value="Polyribonucleotide nucleotidyltransferase"/>
    <property type="match status" value="1"/>
</dbReference>
<dbReference type="FunFam" id="3.30.1370.10:FF:000001">
    <property type="entry name" value="Polyribonucleotide nucleotidyltransferase"/>
    <property type="match status" value="1"/>
</dbReference>
<dbReference type="FunFam" id="3.30.230.70:FF:000001">
    <property type="entry name" value="Polyribonucleotide nucleotidyltransferase"/>
    <property type="match status" value="1"/>
</dbReference>
<dbReference type="FunFam" id="3.30.230.70:FF:000002">
    <property type="entry name" value="Polyribonucleotide nucleotidyltransferase"/>
    <property type="match status" value="1"/>
</dbReference>
<dbReference type="Gene3D" id="3.30.230.70">
    <property type="entry name" value="GHMP Kinase, N-terminal domain"/>
    <property type="match status" value="2"/>
</dbReference>
<dbReference type="Gene3D" id="3.30.1370.10">
    <property type="entry name" value="K Homology domain, type 1"/>
    <property type="match status" value="1"/>
</dbReference>
<dbReference type="Gene3D" id="2.40.50.140">
    <property type="entry name" value="Nucleic acid-binding proteins"/>
    <property type="match status" value="1"/>
</dbReference>
<dbReference type="HAMAP" id="MF_01595">
    <property type="entry name" value="PNPase"/>
    <property type="match status" value="1"/>
</dbReference>
<dbReference type="InterPro" id="IPR001247">
    <property type="entry name" value="ExoRNase_PH_dom1"/>
</dbReference>
<dbReference type="InterPro" id="IPR015847">
    <property type="entry name" value="ExoRNase_PH_dom2"/>
</dbReference>
<dbReference type="InterPro" id="IPR036345">
    <property type="entry name" value="ExoRNase_PH_dom2_sf"/>
</dbReference>
<dbReference type="InterPro" id="IPR004087">
    <property type="entry name" value="KH_dom"/>
</dbReference>
<dbReference type="InterPro" id="IPR004088">
    <property type="entry name" value="KH_dom_type_1"/>
</dbReference>
<dbReference type="InterPro" id="IPR036612">
    <property type="entry name" value="KH_dom_type_1_sf"/>
</dbReference>
<dbReference type="InterPro" id="IPR012340">
    <property type="entry name" value="NA-bd_OB-fold"/>
</dbReference>
<dbReference type="InterPro" id="IPR012162">
    <property type="entry name" value="PNPase"/>
</dbReference>
<dbReference type="InterPro" id="IPR027408">
    <property type="entry name" value="PNPase/RNase_PH_dom_sf"/>
</dbReference>
<dbReference type="InterPro" id="IPR015848">
    <property type="entry name" value="PNPase_PH_RNA-bd_bac/org-type"/>
</dbReference>
<dbReference type="InterPro" id="IPR036456">
    <property type="entry name" value="PNPase_PH_RNA-bd_sf"/>
</dbReference>
<dbReference type="InterPro" id="IPR020568">
    <property type="entry name" value="Ribosomal_Su5_D2-typ_SF"/>
</dbReference>
<dbReference type="InterPro" id="IPR003029">
    <property type="entry name" value="S1_domain"/>
</dbReference>
<dbReference type="NCBIfam" id="TIGR03591">
    <property type="entry name" value="polynuc_phos"/>
    <property type="match status" value="1"/>
</dbReference>
<dbReference type="NCBIfam" id="NF008805">
    <property type="entry name" value="PRK11824.1"/>
    <property type="match status" value="1"/>
</dbReference>
<dbReference type="PANTHER" id="PTHR11252">
    <property type="entry name" value="POLYRIBONUCLEOTIDE NUCLEOTIDYLTRANSFERASE"/>
    <property type="match status" value="1"/>
</dbReference>
<dbReference type="PANTHER" id="PTHR11252:SF0">
    <property type="entry name" value="POLYRIBONUCLEOTIDE NUCLEOTIDYLTRANSFERASE 1, MITOCHONDRIAL"/>
    <property type="match status" value="1"/>
</dbReference>
<dbReference type="Pfam" id="PF00013">
    <property type="entry name" value="KH_1"/>
    <property type="match status" value="1"/>
</dbReference>
<dbReference type="Pfam" id="PF03726">
    <property type="entry name" value="PNPase"/>
    <property type="match status" value="1"/>
</dbReference>
<dbReference type="Pfam" id="PF01138">
    <property type="entry name" value="RNase_PH"/>
    <property type="match status" value="2"/>
</dbReference>
<dbReference type="Pfam" id="PF03725">
    <property type="entry name" value="RNase_PH_C"/>
    <property type="match status" value="2"/>
</dbReference>
<dbReference type="Pfam" id="PF00575">
    <property type="entry name" value="S1"/>
    <property type="match status" value="1"/>
</dbReference>
<dbReference type="PIRSF" id="PIRSF005499">
    <property type="entry name" value="PNPase"/>
    <property type="match status" value="1"/>
</dbReference>
<dbReference type="SMART" id="SM00322">
    <property type="entry name" value="KH"/>
    <property type="match status" value="1"/>
</dbReference>
<dbReference type="SMART" id="SM00316">
    <property type="entry name" value="S1"/>
    <property type="match status" value="1"/>
</dbReference>
<dbReference type="SUPFAM" id="SSF54791">
    <property type="entry name" value="Eukaryotic type KH-domain (KH-domain type I)"/>
    <property type="match status" value="1"/>
</dbReference>
<dbReference type="SUPFAM" id="SSF50249">
    <property type="entry name" value="Nucleic acid-binding proteins"/>
    <property type="match status" value="1"/>
</dbReference>
<dbReference type="SUPFAM" id="SSF46915">
    <property type="entry name" value="Polynucleotide phosphorylase/guanosine pentaphosphate synthase (PNPase/GPSI), domain 3"/>
    <property type="match status" value="1"/>
</dbReference>
<dbReference type="SUPFAM" id="SSF55666">
    <property type="entry name" value="Ribonuclease PH domain 2-like"/>
    <property type="match status" value="2"/>
</dbReference>
<dbReference type="SUPFAM" id="SSF54211">
    <property type="entry name" value="Ribosomal protein S5 domain 2-like"/>
    <property type="match status" value="2"/>
</dbReference>
<dbReference type="PROSITE" id="PS50084">
    <property type="entry name" value="KH_TYPE_1"/>
    <property type="match status" value="1"/>
</dbReference>
<dbReference type="PROSITE" id="PS50126">
    <property type="entry name" value="S1"/>
    <property type="match status" value="1"/>
</dbReference>